<comment type="function">
    <text evidence="1 5">Required for normal Golgi morphology and function (By similarity). Ensures, when in complex with FPP3/VETH1 and FPP2/VETH2, the correct secondary cell wall (SCW) deposition pattern by recruiting exocyst components to cortical microtubules in xylem cells during secondary cell wall deposition (PubMed:25541219).</text>
</comment>
<comment type="subunit">
    <text evidence="1 5 6 7 10">Homodimer (PubMed:27448097). Component of the conserved oligomeric Golgi complex which is composed of eight different subunits and is required for normal Golgi morphology and localization (Probable). Binds to COG3 and COG4 (PubMed:27448097). Interacts with FPP3/VETH1 and FPP2/VETH2; this interaction promotes the association between cortical microtubules and EXO70A1 (PubMed:25541219). Binds to SEC15B, and, possibly, with EXO70A1, SEC3A and SEC10A (PubMed:27801942).</text>
</comment>
<comment type="interaction">
    <interactant intactId="EBI-4429018">
        <id>F4JRR1</id>
    </interactant>
    <interactant intactId="EBI-1392093">
        <id>Q5ICL9</id>
        <label>NPR4</label>
    </interactant>
    <organismsDiffer>false</organismsDiffer>
    <experiments>3</experiments>
</comment>
<comment type="subcellular location">
    <subcellularLocation>
        <location evidence="2">Golgi apparatus membrane</location>
        <topology evidence="2">Peripheral membrane protein</topology>
        <orientation evidence="2">Cytoplasmic side</orientation>
    </subcellularLocation>
    <text evidence="5">Localized at vesicle-like small compartments at cortical microtubules.</text>
</comment>
<comment type="similarity">
    <text evidence="9">Belongs to the COG2 family.</text>
</comment>
<comment type="sequence caution" evidence="9">
    <conflict type="erroneous gene model prediction">
        <sequence resource="EMBL-CDS" id="CAB41124"/>
    </conflict>
</comment>
<comment type="sequence caution" evidence="9">
    <conflict type="erroneous gene model prediction">
        <sequence resource="EMBL-CDS" id="CAB79394"/>
    </conflict>
</comment>
<organism>
    <name type="scientific">Arabidopsis thaliana</name>
    <name type="common">Mouse-ear cress</name>
    <dbReference type="NCBI Taxonomy" id="3702"/>
    <lineage>
        <taxon>Eukaryota</taxon>
        <taxon>Viridiplantae</taxon>
        <taxon>Streptophyta</taxon>
        <taxon>Embryophyta</taxon>
        <taxon>Tracheophyta</taxon>
        <taxon>Spermatophyta</taxon>
        <taxon>Magnoliopsida</taxon>
        <taxon>eudicotyledons</taxon>
        <taxon>Gunneridae</taxon>
        <taxon>Pentapetalae</taxon>
        <taxon>rosids</taxon>
        <taxon>malvids</taxon>
        <taxon>Brassicales</taxon>
        <taxon>Brassicaceae</taxon>
        <taxon>Camelineae</taxon>
        <taxon>Arabidopsis</taxon>
    </lineage>
</organism>
<accession>F4JRR1</accession>
<accession>Q9ASS9</accession>
<accession>Q9SZX4</accession>
<dbReference type="EMBL" id="AL049657">
    <property type="protein sequence ID" value="CAB41124.1"/>
    <property type="status" value="ALT_SEQ"/>
    <property type="molecule type" value="Genomic_DNA"/>
</dbReference>
<dbReference type="EMBL" id="AL161562">
    <property type="protein sequence ID" value="CAB79394.1"/>
    <property type="status" value="ALT_SEQ"/>
    <property type="molecule type" value="Genomic_DNA"/>
</dbReference>
<dbReference type="EMBL" id="CP002687">
    <property type="protein sequence ID" value="AEE84970.1"/>
    <property type="molecule type" value="Genomic_DNA"/>
</dbReference>
<dbReference type="EMBL" id="AF367300">
    <property type="protein sequence ID" value="AAK32887.1"/>
    <property type="molecule type" value="mRNA"/>
</dbReference>
<dbReference type="EMBL" id="AY091689">
    <property type="protein sequence ID" value="AAM10288.1"/>
    <property type="molecule type" value="mRNA"/>
</dbReference>
<dbReference type="PIR" id="T06668">
    <property type="entry name" value="T06668"/>
</dbReference>
<dbReference type="RefSeq" id="NP_567710.1">
    <property type="nucleotide sequence ID" value="NM_118617.5"/>
</dbReference>
<dbReference type="SMR" id="F4JRR1"/>
<dbReference type="FunCoup" id="F4JRR1">
    <property type="interactions" value="5144"/>
</dbReference>
<dbReference type="IntAct" id="F4JRR1">
    <property type="interactions" value="38"/>
</dbReference>
<dbReference type="STRING" id="3702.F4JRR1"/>
<dbReference type="TCDB" id="3.A.31.1.2">
    <property type="family name" value="the endosomal sorting complexes required for transport iii (escrt-iii) family"/>
</dbReference>
<dbReference type="iPTMnet" id="F4JRR1"/>
<dbReference type="PaxDb" id="3702-AT4G24840.1"/>
<dbReference type="ProteomicsDB" id="218394"/>
<dbReference type="EnsemblPlants" id="AT4G24840.1">
    <property type="protein sequence ID" value="AT4G24840.1"/>
    <property type="gene ID" value="AT4G24840"/>
</dbReference>
<dbReference type="GeneID" id="828587"/>
<dbReference type="Gramene" id="AT4G24840.1">
    <property type="protein sequence ID" value="AT4G24840.1"/>
    <property type="gene ID" value="AT4G24840"/>
</dbReference>
<dbReference type="KEGG" id="ath:AT4G24840"/>
<dbReference type="Araport" id="AT4G24840"/>
<dbReference type="TAIR" id="AT4G24840">
    <property type="gene designation" value="COG2"/>
</dbReference>
<dbReference type="eggNOG" id="KOG2307">
    <property type="taxonomic scope" value="Eukaryota"/>
</dbReference>
<dbReference type="HOGENOM" id="CLU_005470_0_0_1"/>
<dbReference type="InParanoid" id="F4JRR1"/>
<dbReference type="OMA" id="CWAEGVY"/>
<dbReference type="PRO" id="PR:F4JRR1"/>
<dbReference type="Proteomes" id="UP000006548">
    <property type="component" value="Chromosome 4"/>
</dbReference>
<dbReference type="ExpressionAtlas" id="F4JRR1">
    <property type="expression patterns" value="baseline and differential"/>
</dbReference>
<dbReference type="GO" id="GO:0031410">
    <property type="term" value="C:cytoplasmic vesicle"/>
    <property type="evidence" value="ECO:0000314"/>
    <property type="project" value="UniProtKB"/>
</dbReference>
<dbReference type="GO" id="GO:0000139">
    <property type="term" value="C:Golgi membrane"/>
    <property type="evidence" value="ECO:0007669"/>
    <property type="project" value="UniProtKB-SubCell"/>
</dbReference>
<dbReference type="GO" id="GO:0000325">
    <property type="term" value="C:plant-type vacuole"/>
    <property type="evidence" value="ECO:0007005"/>
    <property type="project" value="TAIR"/>
</dbReference>
<dbReference type="GO" id="GO:0042803">
    <property type="term" value="F:protein homodimerization activity"/>
    <property type="evidence" value="ECO:0000314"/>
    <property type="project" value="UniProtKB"/>
</dbReference>
<dbReference type="GO" id="GO:0007030">
    <property type="term" value="P:Golgi organization"/>
    <property type="evidence" value="ECO:0007669"/>
    <property type="project" value="InterPro"/>
</dbReference>
<dbReference type="GO" id="GO:0015031">
    <property type="term" value="P:protein transport"/>
    <property type="evidence" value="ECO:0007669"/>
    <property type="project" value="UniProtKB-KW"/>
</dbReference>
<dbReference type="GO" id="GO:0060178">
    <property type="term" value="P:regulation of exocyst localization"/>
    <property type="evidence" value="ECO:0000314"/>
    <property type="project" value="UniProtKB"/>
</dbReference>
<dbReference type="InterPro" id="IPR009316">
    <property type="entry name" value="COG2"/>
</dbReference>
<dbReference type="InterPro" id="IPR024603">
    <property type="entry name" value="COG_complex_COG2_C"/>
</dbReference>
<dbReference type="InterPro" id="IPR024602">
    <property type="entry name" value="COG_su2_N"/>
</dbReference>
<dbReference type="PANTHER" id="PTHR12961">
    <property type="entry name" value="CONSERVED OLIGOMERIC GOLGI COMPLEX COMPONENT 2"/>
    <property type="match status" value="1"/>
</dbReference>
<dbReference type="PANTHER" id="PTHR12961:SF0">
    <property type="entry name" value="CONSERVED OLIGOMERIC GOLGI COMPLEX SUBUNIT 2"/>
    <property type="match status" value="1"/>
</dbReference>
<dbReference type="Pfam" id="PF12022">
    <property type="entry name" value="COG2_C"/>
    <property type="match status" value="1"/>
</dbReference>
<dbReference type="Pfam" id="PF06148">
    <property type="entry name" value="COG2_N"/>
    <property type="match status" value="1"/>
</dbReference>
<proteinExistence type="evidence at protein level"/>
<reference key="1">
    <citation type="journal article" date="1999" name="Nature">
        <title>Sequence and analysis of chromosome 4 of the plant Arabidopsis thaliana.</title>
        <authorList>
            <person name="Mayer K.F.X."/>
            <person name="Schueller C."/>
            <person name="Wambutt R."/>
            <person name="Murphy G."/>
            <person name="Volckaert G."/>
            <person name="Pohl T."/>
            <person name="Duesterhoeft A."/>
            <person name="Stiekema W."/>
            <person name="Entian K.-D."/>
            <person name="Terryn N."/>
            <person name="Harris B."/>
            <person name="Ansorge W."/>
            <person name="Brandt P."/>
            <person name="Grivell L.A."/>
            <person name="Rieger M."/>
            <person name="Weichselgartner M."/>
            <person name="de Simone V."/>
            <person name="Obermaier B."/>
            <person name="Mache R."/>
            <person name="Mueller M."/>
            <person name="Kreis M."/>
            <person name="Delseny M."/>
            <person name="Puigdomenech P."/>
            <person name="Watson M."/>
            <person name="Schmidtheini T."/>
            <person name="Reichert B."/>
            <person name="Portetelle D."/>
            <person name="Perez-Alonso M."/>
            <person name="Boutry M."/>
            <person name="Bancroft I."/>
            <person name="Vos P."/>
            <person name="Hoheisel J."/>
            <person name="Zimmermann W."/>
            <person name="Wedler H."/>
            <person name="Ridley P."/>
            <person name="Langham S.-A."/>
            <person name="McCullagh B."/>
            <person name="Bilham L."/>
            <person name="Robben J."/>
            <person name="van der Schueren J."/>
            <person name="Grymonprez B."/>
            <person name="Chuang Y.-J."/>
            <person name="Vandenbussche F."/>
            <person name="Braeken M."/>
            <person name="Weltjens I."/>
            <person name="Voet M."/>
            <person name="Bastiaens I."/>
            <person name="Aert R."/>
            <person name="Defoor E."/>
            <person name="Weitzenegger T."/>
            <person name="Bothe G."/>
            <person name="Ramsperger U."/>
            <person name="Hilbert H."/>
            <person name="Braun M."/>
            <person name="Holzer E."/>
            <person name="Brandt A."/>
            <person name="Peters S."/>
            <person name="van Staveren M."/>
            <person name="Dirkse W."/>
            <person name="Mooijman P."/>
            <person name="Klein Lankhorst R."/>
            <person name="Rose M."/>
            <person name="Hauf J."/>
            <person name="Koetter P."/>
            <person name="Berneiser S."/>
            <person name="Hempel S."/>
            <person name="Feldpausch M."/>
            <person name="Lamberth S."/>
            <person name="Van den Daele H."/>
            <person name="De Keyser A."/>
            <person name="Buysshaert C."/>
            <person name="Gielen J."/>
            <person name="Villarroel R."/>
            <person name="De Clercq R."/>
            <person name="van Montagu M."/>
            <person name="Rogers J."/>
            <person name="Cronin A."/>
            <person name="Quail M.A."/>
            <person name="Bray-Allen S."/>
            <person name="Clark L."/>
            <person name="Doggett J."/>
            <person name="Hall S."/>
            <person name="Kay M."/>
            <person name="Lennard N."/>
            <person name="McLay K."/>
            <person name="Mayes R."/>
            <person name="Pettett A."/>
            <person name="Rajandream M.A."/>
            <person name="Lyne M."/>
            <person name="Benes V."/>
            <person name="Rechmann S."/>
            <person name="Borkova D."/>
            <person name="Bloecker H."/>
            <person name="Scharfe M."/>
            <person name="Grimm M."/>
            <person name="Loehnert T.-H."/>
            <person name="Dose S."/>
            <person name="de Haan M."/>
            <person name="Maarse A.C."/>
            <person name="Schaefer M."/>
            <person name="Mueller-Auer S."/>
            <person name="Gabel C."/>
            <person name="Fuchs M."/>
            <person name="Fartmann B."/>
            <person name="Granderath K."/>
            <person name="Dauner D."/>
            <person name="Herzl A."/>
            <person name="Neumann S."/>
            <person name="Argiriou A."/>
            <person name="Vitale D."/>
            <person name="Liguori R."/>
            <person name="Piravandi E."/>
            <person name="Massenet O."/>
            <person name="Quigley F."/>
            <person name="Clabauld G."/>
            <person name="Muendlein A."/>
            <person name="Felber R."/>
            <person name="Schnabl S."/>
            <person name="Hiller R."/>
            <person name="Schmidt W."/>
            <person name="Lecharny A."/>
            <person name="Aubourg S."/>
            <person name="Chefdor F."/>
            <person name="Cooke R."/>
            <person name="Berger C."/>
            <person name="Monfort A."/>
            <person name="Casacuberta E."/>
            <person name="Gibbons T."/>
            <person name="Weber N."/>
            <person name="Vandenbol M."/>
            <person name="Bargues M."/>
            <person name="Terol J."/>
            <person name="Torres A."/>
            <person name="Perez-Perez A."/>
            <person name="Purnelle B."/>
            <person name="Bent E."/>
            <person name="Johnson S."/>
            <person name="Tacon D."/>
            <person name="Jesse T."/>
            <person name="Heijnen L."/>
            <person name="Schwarz S."/>
            <person name="Scholler P."/>
            <person name="Heber S."/>
            <person name="Francs P."/>
            <person name="Bielke C."/>
            <person name="Frishman D."/>
            <person name="Haase D."/>
            <person name="Lemcke K."/>
            <person name="Mewes H.-W."/>
            <person name="Stocker S."/>
            <person name="Zaccaria P."/>
            <person name="Bevan M."/>
            <person name="Wilson R.K."/>
            <person name="de la Bastide M."/>
            <person name="Habermann K."/>
            <person name="Parnell L."/>
            <person name="Dedhia N."/>
            <person name="Gnoj L."/>
            <person name="Schutz K."/>
            <person name="Huang E."/>
            <person name="Spiegel L."/>
            <person name="Sekhon M."/>
            <person name="Murray J."/>
            <person name="Sheet P."/>
            <person name="Cordes M."/>
            <person name="Abu-Threideh J."/>
            <person name="Stoneking T."/>
            <person name="Kalicki J."/>
            <person name="Graves T."/>
            <person name="Harmon G."/>
            <person name="Edwards J."/>
            <person name="Latreille P."/>
            <person name="Courtney L."/>
            <person name="Cloud J."/>
            <person name="Abbott A."/>
            <person name="Scott K."/>
            <person name="Johnson D."/>
            <person name="Minx P."/>
            <person name="Bentley D."/>
            <person name="Fulton B."/>
            <person name="Miller N."/>
            <person name="Greco T."/>
            <person name="Kemp K."/>
            <person name="Kramer J."/>
            <person name="Fulton L."/>
            <person name="Mardis E."/>
            <person name="Dante M."/>
            <person name="Pepin K."/>
            <person name="Hillier L.W."/>
            <person name="Nelson J."/>
            <person name="Spieth J."/>
            <person name="Ryan E."/>
            <person name="Andrews S."/>
            <person name="Geisel C."/>
            <person name="Layman D."/>
            <person name="Du H."/>
            <person name="Ali J."/>
            <person name="Berghoff A."/>
            <person name="Jones K."/>
            <person name="Drone K."/>
            <person name="Cotton M."/>
            <person name="Joshu C."/>
            <person name="Antonoiu B."/>
            <person name="Zidanic M."/>
            <person name="Strong C."/>
            <person name="Sun H."/>
            <person name="Lamar B."/>
            <person name="Yordan C."/>
            <person name="Ma P."/>
            <person name="Zhong J."/>
            <person name="Preston R."/>
            <person name="Vil D."/>
            <person name="Shekher M."/>
            <person name="Matero A."/>
            <person name="Shah R."/>
            <person name="Swaby I.K."/>
            <person name="O'Shaughnessy A."/>
            <person name="Rodriguez M."/>
            <person name="Hoffman J."/>
            <person name="Till S."/>
            <person name="Granat S."/>
            <person name="Shohdy N."/>
            <person name="Hasegawa A."/>
            <person name="Hameed A."/>
            <person name="Lodhi M."/>
            <person name="Johnson A."/>
            <person name="Chen E."/>
            <person name="Marra M.A."/>
            <person name="Martienssen R."/>
            <person name="McCombie W.R."/>
        </authorList>
    </citation>
    <scope>NUCLEOTIDE SEQUENCE [LARGE SCALE GENOMIC DNA]</scope>
    <source>
        <strain>cv. Columbia</strain>
    </source>
</reference>
<reference key="2">
    <citation type="journal article" date="2017" name="Plant J.">
        <title>Araport11: a complete reannotation of the Arabidopsis thaliana reference genome.</title>
        <authorList>
            <person name="Cheng C.Y."/>
            <person name="Krishnakumar V."/>
            <person name="Chan A.P."/>
            <person name="Thibaud-Nissen F."/>
            <person name="Schobel S."/>
            <person name="Town C.D."/>
        </authorList>
    </citation>
    <scope>GENOME REANNOTATION</scope>
    <source>
        <strain>cv. Columbia</strain>
    </source>
</reference>
<reference key="3">
    <citation type="journal article" date="2003" name="Science">
        <title>Empirical analysis of transcriptional activity in the Arabidopsis genome.</title>
        <authorList>
            <person name="Yamada K."/>
            <person name="Lim J."/>
            <person name="Dale J.M."/>
            <person name="Chen H."/>
            <person name="Shinn P."/>
            <person name="Palm C.J."/>
            <person name="Southwick A.M."/>
            <person name="Wu H.C."/>
            <person name="Kim C.J."/>
            <person name="Nguyen M."/>
            <person name="Pham P.K."/>
            <person name="Cheuk R.F."/>
            <person name="Karlin-Newmann G."/>
            <person name="Liu S.X."/>
            <person name="Lam B."/>
            <person name="Sakano H."/>
            <person name="Wu T."/>
            <person name="Yu G."/>
            <person name="Miranda M."/>
            <person name="Quach H.L."/>
            <person name="Tripp M."/>
            <person name="Chang C.H."/>
            <person name="Lee J.M."/>
            <person name="Toriumi M.J."/>
            <person name="Chan M.M."/>
            <person name="Tang C.C."/>
            <person name="Onodera C.S."/>
            <person name="Deng J.M."/>
            <person name="Akiyama K."/>
            <person name="Ansari Y."/>
            <person name="Arakawa T."/>
            <person name="Banh J."/>
            <person name="Banno F."/>
            <person name="Bowser L."/>
            <person name="Brooks S.Y."/>
            <person name="Carninci P."/>
            <person name="Chao Q."/>
            <person name="Choy N."/>
            <person name="Enju A."/>
            <person name="Goldsmith A.D."/>
            <person name="Gurjal M."/>
            <person name="Hansen N.F."/>
            <person name="Hayashizaki Y."/>
            <person name="Johnson-Hopson C."/>
            <person name="Hsuan V.W."/>
            <person name="Iida K."/>
            <person name="Karnes M."/>
            <person name="Khan S."/>
            <person name="Koesema E."/>
            <person name="Ishida J."/>
            <person name="Jiang P.X."/>
            <person name="Jones T."/>
            <person name="Kawai J."/>
            <person name="Kamiya A."/>
            <person name="Meyers C."/>
            <person name="Nakajima M."/>
            <person name="Narusaka M."/>
            <person name="Seki M."/>
            <person name="Sakurai T."/>
            <person name="Satou M."/>
            <person name="Tamse R."/>
            <person name="Vaysberg M."/>
            <person name="Wallender E.K."/>
            <person name="Wong C."/>
            <person name="Yamamura Y."/>
            <person name="Yuan S."/>
            <person name="Shinozaki K."/>
            <person name="Davis R.W."/>
            <person name="Theologis A."/>
            <person name="Ecker J.R."/>
        </authorList>
    </citation>
    <scope>NUCLEOTIDE SEQUENCE [LARGE SCALE MRNA]</scope>
    <source>
        <strain>cv. Columbia</strain>
    </source>
</reference>
<reference key="4">
    <citation type="journal article" date="2012" name="Mol. Cell. Proteomics">
        <title>Comparative large-scale characterisation of plant vs. mammal proteins reveals similar and idiosyncratic N-alpha acetylation features.</title>
        <authorList>
            <person name="Bienvenut W.V."/>
            <person name="Sumpton D."/>
            <person name="Martinez A."/>
            <person name="Lilla S."/>
            <person name="Espagne C."/>
            <person name="Meinnel T."/>
            <person name="Giglione C."/>
        </authorList>
    </citation>
    <scope>IDENTIFICATION BY MASS SPECTROMETRY [LARGE SCALE ANALYSIS]</scope>
</reference>
<reference key="5">
    <citation type="journal article" date="2015" name="Plant Cell Physiol.">
        <title>Novel coiled-coil proteins regulate exocyst association with cortical microtubules in xylem cells via the conserved oligomeric golgi-complex 2 protein.</title>
        <authorList>
            <person name="Oda Y."/>
            <person name="Iida Y."/>
            <person name="Nagashima Y."/>
            <person name="Sugiyama Y."/>
            <person name="Fukuda H."/>
        </authorList>
    </citation>
    <scope>FUNCTION</scope>
    <scope>INTERACTION WITH FPP3/VETH1 AND FPP2/VETH2</scope>
    <scope>SUBCELLULAR LOCATION</scope>
</reference>
<reference key="6">
    <citation type="journal article" date="2016" name="PLoS Genet.">
        <title>Arabidopsis COG complex subunits COG3 and COG8 modulate golgi morphology, vesicle trafficking homeostasis and are essential for pollen tube growth.</title>
        <authorList>
            <person name="Tan X."/>
            <person name="Cao K."/>
            <person name="Liu F."/>
            <person name="Li Y."/>
            <person name="Li P."/>
            <person name="Gao C."/>
            <person name="Ding Y."/>
            <person name="Lan Z."/>
            <person name="Shi Z."/>
            <person name="Rui Q."/>
            <person name="Feng Y."/>
            <person name="Liu Y."/>
            <person name="Zhao Y."/>
            <person name="Wu C."/>
            <person name="Zhang Q."/>
            <person name="Li Y."/>
            <person name="Jiang L."/>
            <person name="Bao Y."/>
        </authorList>
    </citation>
    <scope>SUBUNIT</scope>
    <scope>INTERACTION WITH COG3 AND COG4</scope>
    <scope>GENE FAMILY</scope>
    <scope>NOMENCLATURE</scope>
</reference>
<reference key="7">
    <citation type="journal article" date="2017" name="New Phytol.">
        <title>Microtubule-dependent targeting of the exocyst complex is necessary for xylem development in Arabidopsis.</title>
        <authorList>
            <person name="Vukasinovic N."/>
            <person name="Oda Y."/>
            <person name="Pejchar P."/>
            <person name="Synek L."/>
            <person name="Pecenkova T."/>
            <person name="Rawat A."/>
            <person name="Sekeres J."/>
            <person name="Potocky M."/>
            <person name="Zarsky V."/>
        </authorList>
    </citation>
    <scope>INTERACTION WITH SEC15B</scope>
    <source>
        <strain>cv. Columbia</strain>
    </source>
</reference>
<gene>
    <name evidence="8" type="primary">COG2</name>
    <name evidence="11" type="ordered locus">At4g24840</name>
    <name evidence="12" type="ORF">F6I7.50</name>
</gene>
<feature type="chain" id="PRO_0000448525" description="Conserved oligomeric Golgi complex subunit 2">
    <location>
        <begin position="1"/>
        <end position="756"/>
    </location>
</feature>
<feature type="region of interest" description="Disordered" evidence="4">
    <location>
        <begin position="173"/>
        <end position="199"/>
    </location>
</feature>
<feature type="coiled-coil region" evidence="3">
    <location>
        <begin position="62"/>
        <end position="82"/>
    </location>
</feature>
<feature type="sequence conflict" description="In Ref. 3; AAK32887/AAM10288." evidence="9" ref="3">
    <original>L</original>
    <variation>F</variation>
    <location>
        <position position="682"/>
    </location>
</feature>
<evidence type="ECO:0000250" key="1"/>
<evidence type="ECO:0000250" key="2">
    <source>
        <dbReference type="UniProtKB" id="O59705"/>
    </source>
</evidence>
<evidence type="ECO:0000255" key="3"/>
<evidence type="ECO:0000256" key="4">
    <source>
        <dbReference type="SAM" id="MobiDB-lite"/>
    </source>
</evidence>
<evidence type="ECO:0000269" key="5">
    <source>
    </source>
</evidence>
<evidence type="ECO:0000269" key="6">
    <source>
    </source>
</evidence>
<evidence type="ECO:0000269" key="7">
    <source>
    </source>
</evidence>
<evidence type="ECO:0000303" key="8">
    <source>
    </source>
</evidence>
<evidence type="ECO:0000305" key="9"/>
<evidence type="ECO:0000305" key="10">
    <source>
    </source>
</evidence>
<evidence type="ECO:0000312" key="11">
    <source>
        <dbReference type="Araport" id="AT4G24840"/>
    </source>
</evidence>
<evidence type="ECO:0000312" key="12">
    <source>
        <dbReference type="EMBL" id="CAB41124.1"/>
    </source>
</evidence>
<sequence length="756" mass="84619">MSDLVATSPSPSSAPRSATDFFSDPYDSHPLWFKPSLFLSPNFDSESYISELRTFVPFDTLRSELRSHLASLNRELVDLINRDYADFVNLSTKLVDIDAAVVRMRAPLLELREKITGFRGSVEAALFALRNGLQQRSDAAAAREVLELLLDTFHVVSKVEKLIKVLPSTPSDWQNEDANSMGRSSMNDENSTQQDGTTMRETQSMLLERIASEMNRLKFYMAHAQNLPFIENMEKRIQSASVLLDASLGHCFIDGLNNSDTSVLYNCLRAYAAIDNTNAAEEIFRTTIVAPFIQKIITHETTTNAAGTSEDELENDYKQIKHFIAKDCKMLLEISSTDKSGLHVFDFLANSILKEVLWAIQKVKPGAFSPGRPTEFLKNYKASLDFLAYLEGYCPSRSAVTKFRAEAICVEFMKQWNVGVYFSLRFQEIAGALDSALTSPSLVFIQDSDKESSLNLILRQSDTLLECLRSCWKEDVLVFSAADKFLRLTLQLLSRYSFWVSSALNNRKSNASPSPGCEWAVSATAEDFVYVIHDVNCLVSEVCGDYLGHISQYLSSSSTEVLDVVRISIEQGGVSLEKVLPLLTKTIIDVIVDKSVEDLRQLRGITATFRMTNKPLPVRHSPYVVGLLRPVKAFLEGDKARNYLTQKTKEELLHGSVSEITRRYYELAADVVSVARKTQSSLQKLRQNAQRRGGAASGVSDQNVSETDKMCMQLFLDIQEYGRNVSALGLKPADIPEYCSFWQCVAPADRQNSISV</sequence>
<protein>
    <recommendedName>
        <fullName evidence="8">Conserved oligomeric Golgi complex subunit 2</fullName>
        <shortName evidence="8">COG complex subunit 2</shortName>
    </recommendedName>
    <alternativeName>
        <fullName evidence="8">Component of oligomeric Golgi complex 2</fullName>
    </alternativeName>
</protein>
<keyword id="KW-0175">Coiled coil</keyword>
<keyword id="KW-0333">Golgi apparatus</keyword>
<keyword id="KW-0472">Membrane</keyword>
<keyword id="KW-0653">Protein transport</keyword>
<keyword id="KW-1185">Reference proteome</keyword>
<keyword id="KW-0813">Transport</keyword>
<name>COG2_ARATH</name>